<proteinExistence type="inferred from homology"/>
<evidence type="ECO:0000255" key="1">
    <source>
        <dbReference type="HAMAP-Rule" id="MF_00529"/>
    </source>
</evidence>
<gene>
    <name evidence="1" type="primary">nifW1</name>
    <name type="ordered locus">Ava_3937</name>
</gene>
<protein>
    <recommendedName>
        <fullName evidence="1">Nitrogenase-stabilizing/protective protein NifW 1</fullName>
    </recommendedName>
</protein>
<accession>Q3M644</accession>
<organism>
    <name type="scientific">Trichormus variabilis (strain ATCC 29413 / PCC 7937)</name>
    <name type="common">Anabaena variabilis</name>
    <dbReference type="NCBI Taxonomy" id="240292"/>
    <lineage>
        <taxon>Bacteria</taxon>
        <taxon>Bacillati</taxon>
        <taxon>Cyanobacteriota</taxon>
        <taxon>Cyanophyceae</taxon>
        <taxon>Nostocales</taxon>
        <taxon>Nostocaceae</taxon>
        <taxon>Trichormus</taxon>
    </lineage>
</organism>
<feature type="chain" id="PRO_0000265748" description="Nitrogenase-stabilizing/protective protein NifW 1">
    <location>
        <begin position="1"/>
        <end position="105"/>
    </location>
</feature>
<dbReference type="EMBL" id="CP000117">
    <property type="protein sequence ID" value="ABA23542.1"/>
    <property type="molecule type" value="Genomic_DNA"/>
</dbReference>
<dbReference type="SMR" id="Q3M644"/>
<dbReference type="STRING" id="240292.Ava_3937"/>
<dbReference type="KEGG" id="ava:Ava_3937"/>
<dbReference type="eggNOG" id="ENOG50330W8">
    <property type="taxonomic scope" value="Bacteria"/>
</dbReference>
<dbReference type="HOGENOM" id="CLU_145318_1_0_3"/>
<dbReference type="Proteomes" id="UP000002533">
    <property type="component" value="Chromosome"/>
</dbReference>
<dbReference type="GO" id="GO:0009399">
    <property type="term" value="P:nitrogen fixation"/>
    <property type="evidence" value="ECO:0007669"/>
    <property type="project" value="UniProtKB-UniRule"/>
</dbReference>
<dbReference type="HAMAP" id="MF_00529">
    <property type="entry name" value="NifW"/>
    <property type="match status" value="1"/>
</dbReference>
<dbReference type="InterPro" id="IPR004893">
    <property type="entry name" value="NifW"/>
</dbReference>
<dbReference type="NCBIfam" id="NF010702">
    <property type="entry name" value="PRK14102.1"/>
    <property type="match status" value="1"/>
</dbReference>
<dbReference type="Pfam" id="PF03206">
    <property type="entry name" value="NifW"/>
    <property type="match status" value="1"/>
</dbReference>
<dbReference type="PIRSF" id="PIRSF005790">
    <property type="entry name" value="NifW"/>
    <property type="match status" value="1"/>
</dbReference>
<name>NIFW1_TRIV2</name>
<sequence length="105" mass="12262">MTKSLEEFKKLVDAEEYFKFFELDYDAKIVNVNRLHILKKFSQLISEIDTNYPDISAEEKLNQYSLALQSAYQVFLGSSPQEQKLFKVFKDKPKNVITLTELSSD</sequence>
<keyword id="KW-0535">Nitrogen fixation</keyword>
<reference key="1">
    <citation type="journal article" date="2014" name="Stand. Genomic Sci.">
        <title>Complete genome sequence of Anabaena variabilis ATCC 29413.</title>
        <authorList>
            <person name="Thiel T."/>
            <person name="Pratte B.S."/>
            <person name="Zhong J."/>
            <person name="Goodwin L."/>
            <person name="Copeland A."/>
            <person name="Lucas S."/>
            <person name="Han C."/>
            <person name="Pitluck S."/>
            <person name="Land M.L."/>
            <person name="Kyrpides N.C."/>
            <person name="Woyke T."/>
        </authorList>
    </citation>
    <scope>NUCLEOTIDE SEQUENCE [LARGE SCALE GENOMIC DNA]</scope>
    <source>
        <strain>ATCC 29413 / PCC 7937</strain>
    </source>
</reference>
<comment type="function">
    <text evidence="1">May protect the nitrogenase Fe-Mo protein from oxidative damage.</text>
</comment>
<comment type="subunit">
    <text evidence="1">Homotrimer; associates with NifD.</text>
</comment>
<comment type="similarity">
    <text evidence="1">Belongs to the NifW family.</text>
</comment>